<keyword id="KW-0217">Developmental protein</keyword>
<keyword id="KW-0238">DNA-binding</keyword>
<keyword id="KW-0539">Nucleus</keyword>
<keyword id="KW-1185">Reference proteome</keyword>
<keyword id="KW-0804">Transcription</keyword>
<keyword id="KW-0805">Transcription regulation</keyword>
<gene>
    <name type="primary">HAND2</name>
    <name type="synonym">DHAND</name>
</gene>
<sequence>MSLVGGFPHHPVVHHEGYPLRRRRCRRRRRHPLRPRGEPLLHGWLISSHPEMSPPDYSMALSYSPEYANGAPGMDHSHYGGVPPGSGPPGLGGPRPVKRRGTANRKERRRTQSINSAFAELRECIPNVPADTKLSKIKTLRLATSYIAYLMDLLPKDDQNGEAEAFKAEIKKTDVKEEKRKKELNEILKSTVSSSDKKTKGRTGWPQHVWALELKQ</sequence>
<accession>Q90690</accession>
<feature type="chain" id="PRO_0000127195" description="Heart- and neural crest derivatives-expressed protein 2">
    <location>
        <begin position="1"/>
        <end position="216"/>
    </location>
</feature>
<feature type="domain" description="bHLH" evidence="2">
    <location>
        <begin position="98"/>
        <end position="150"/>
    </location>
</feature>
<feature type="region of interest" description="Disordered" evidence="3">
    <location>
        <begin position="74"/>
        <end position="115"/>
    </location>
</feature>
<feature type="compositionally biased region" description="Gly residues" evidence="3">
    <location>
        <begin position="82"/>
        <end position="93"/>
    </location>
</feature>
<feature type="compositionally biased region" description="Basic residues" evidence="3">
    <location>
        <begin position="96"/>
        <end position="111"/>
    </location>
</feature>
<reference key="1">
    <citation type="journal article" date="1995" name="Science">
        <title>A subclass of bHLH proteins required for cardiac morphogenesis.</title>
        <authorList>
            <person name="Srivastava D."/>
            <person name="Cserjesi P."/>
            <person name="Olson E.N."/>
        </authorList>
    </citation>
    <scope>NUCLEOTIDE SEQUENCE [MRNA]</scope>
    <source>
        <tissue>Embryo</tissue>
    </source>
</reference>
<reference key="2">
    <citation type="journal article" date="2000" name="Development">
        <title>Role of dHAND in the anterior-posterior polarization of the limb bud: implications for the Sonic hedgehog pathway.</title>
        <authorList>
            <person name="Fernandez-Teran M."/>
            <person name="Piedra M.E."/>
            <person name="Kathiriya I.S."/>
            <person name="Srivastava D."/>
            <person name="Rodriguez-Rey J.C."/>
            <person name="Ros M.A."/>
        </authorList>
    </citation>
    <scope>FUNCTION</scope>
    <scope>DEVELOPMENTAL STAGE</scope>
</reference>
<dbReference type="EMBL" id="U40040">
    <property type="protein sequence ID" value="AAC59733.1"/>
    <property type="molecule type" value="mRNA"/>
</dbReference>
<dbReference type="SMR" id="Q90690"/>
<dbReference type="FunCoup" id="Q90690">
    <property type="interactions" value="251"/>
</dbReference>
<dbReference type="STRING" id="9031.ENSGALP00000045960"/>
<dbReference type="VEuPathDB" id="HostDB:geneid_395813"/>
<dbReference type="InParanoid" id="Q90690"/>
<dbReference type="OrthoDB" id="10055449at2759"/>
<dbReference type="PhylomeDB" id="Q90690"/>
<dbReference type="PRO" id="PR:Q90690"/>
<dbReference type="Proteomes" id="UP000000539">
    <property type="component" value="Unassembled WGS sequence"/>
</dbReference>
<dbReference type="GO" id="GO:0005634">
    <property type="term" value="C:nucleus"/>
    <property type="evidence" value="ECO:0007669"/>
    <property type="project" value="UniProtKB-SubCell"/>
</dbReference>
<dbReference type="GO" id="GO:0000981">
    <property type="term" value="F:DNA-binding transcription factor activity, RNA polymerase II-specific"/>
    <property type="evidence" value="ECO:0000318"/>
    <property type="project" value="GO_Central"/>
</dbReference>
<dbReference type="GO" id="GO:0046983">
    <property type="term" value="F:protein dimerization activity"/>
    <property type="evidence" value="ECO:0007669"/>
    <property type="project" value="InterPro"/>
</dbReference>
<dbReference type="GO" id="GO:0000977">
    <property type="term" value="F:RNA polymerase II transcription regulatory region sequence-specific DNA binding"/>
    <property type="evidence" value="ECO:0000318"/>
    <property type="project" value="GO_Central"/>
</dbReference>
<dbReference type="GO" id="GO:0007507">
    <property type="term" value="P:heart development"/>
    <property type="evidence" value="ECO:0000318"/>
    <property type="project" value="GO_Central"/>
</dbReference>
<dbReference type="GO" id="GO:0060174">
    <property type="term" value="P:limb bud formation"/>
    <property type="evidence" value="ECO:0000315"/>
    <property type="project" value="AgBase"/>
</dbReference>
<dbReference type="GO" id="GO:0009949">
    <property type="term" value="P:polarity specification of anterior/posterior axis"/>
    <property type="evidence" value="ECO:0000315"/>
    <property type="project" value="AgBase"/>
</dbReference>
<dbReference type="GO" id="GO:0006357">
    <property type="term" value="P:regulation of transcription by RNA polymerase II"/>
    <property type="evidence" value="ECO:0000318"/>
    <property type="project" value="GO_Central"/>
</dbReference>
<dbReference type="CDD" id="cd11471">
    <property type="entry name" value="bHLH_TS_HAND2"/>
    <property type="match status" value="1"/>
</dbReference>
<dbReference type="FunFam" id="4.10.280.10:FF:000010">
    <property type="entry name" value="Scleraxis bHLH transcription factor"/>
    <property type="match status" value="1"/>
</dbReference>
<dbReference type="Gene3D" id="4.10.280.10">
    <property type="entry name" value="Helix-loop-helix DNA-binding domain"/>
    <property type="match status" value="1"/>
</dbReference>
<dbReference type="InterPro" id="IPR011598">
    <property type="entry name" value="bHLH_dom"/>
</dbReference>
<dbReference type="InterPro" id="IPR050283">
    <property type="entry name" value="E-box_TF_Regulators"/>
</dbReference>
<dbReference type="InterPro" id="IPR036638">
    <property type="entry name" value="HLH_DNA-bd_sf"/>
</dbReference>
<dbReference type="PANTHER" id="PTHR23349">
    <property type="entry name" value="BASIC HELIX-LOOP-HELIX TRANSCRIPTION FACTOR, TWIST"/>
    <property type="match status" value="1"/>
</dbReference>
<dbReference type="PANTHER" id="PTHR23349:SF41">
    <property type="entry name" value="HEART- AND NEURAL CREST DERIVATIVES-EXPRESSED PROTEIN 2"/>
    <property type="match status" value="1"/>
</dbReference>
<dbReference type="Pfam" id="PF00010">
    <property type="entry name" value="HLH"/>
    <property type="match status" value="1"/>
</dbReference>
<dbReference type="SMART" id="SM00353">
    <property type="entry name" value="HLH"/>
    <property type="match status" value="1"/>
</dbReference>
<dbReference type="SUPFAM" id="SSF47459">
    <property type="entry name" value="HLH, helix-loop-helix DNA-binding domain"/>
    <property type="match status" value="1"/>
</dbReference>
<dbReference type="PROSITE" id="PS50888">
    <property type="entry name" value="BHLH"/>
    <property type="match status" value="1"/>
</dbReference>
<name>HAND2_CHICK</name>
<organism>
    <name type="scientific">Gallus gallus</name>
    <name type="common">Chicken</name>
    <dbReference type="NCBI Taxonomy" id="9031"/>
    <lineage>
        <taxon>Eukaryota</taxon>
        <taxon>Metazoa</taxon>
        <taxon>Chordata</taxon>
        <taxon>Craniata</taxon>
        <taxon>Vertebrata</taxon>
        <taxon>Euteleostomi</taxon>
        <taxon>Archelosauria</taxon>
        <taxon>Archosauria</taxon>
        <taxon>Dinosauria</taxon>
        <taxon>Saurischia</taxon>
        <taxon>Theropoda</taxon>
        <taxon>Coelurosauria</taxon>
        <taxon>Aves</taxon>
        <taxon>Neognathae</taxon>
        <taxon>Galloanserae</taxon>
        <taxon>Galliformes</taxon>
        <taxon>Phasianidae</taxon>
        <taxon>Phasianinae</taxon>
        <taxon>Gallus</taxon>
    </lineage>
</organism>
<evidence type="ECO:0000250" key="1"/>
<evidence type="ECO:0000255" key="2">
    <source>
        <dbReference type="PROSITE-ProRule" id="PRU00981"/>
    </source>
</evidence>
<evidence type="ECO:0000256" key="3">
    <source>
        <dbReference type="SAM" id="MobiDB-lite"/>
    </source>
</evidence>
<evidence type="ECO:0000269" key="4">
    <source>
    </source>
</evidence>
<protein>
    <recommendedName>
        <fullName>Heart- and neural crest derivatives-expressed protein 2</fullName>
    </recommendedName>
    <alternativeName>
        <fullName>Deciduum, heart, autonomic nervous system and neural crest derivatives-expressed protein 2</fullName>
        <shortName>dHAND</shortName>
    </alternativeName>
</protein>
<proteinExistence type="evidence at transcript level"/>
<comment type="function">
    <text evidence="1 4">Essential for cardiac morphogenesis. Binds DNA on E-box consensus sequence 5'-CANNTG-3' (By similarity). Plays an important role in limb development, particularly in the establishment of anterior-posterior polarization of the limb bud.</text>
</comment>
<comment type="subunit">
    <text>Efficient DNA binding requires dimerization with another bHLH protein.</text>
</comment>
<comment type="subcellular location">
    <subcellularLocation>
        <location evidence="2">Nucleus</location>
    </subcellularLocation>
</comment>
<comment type="developmental stage">
    <text evidence="4">At stages 8 to 9, expressed in the whole lateral plate mesoderm and precardiogenic mesoderm. At stage 10, expressed throughout the cardiac tube and the sinus venosus. By stage 15, expressed homogeneously in the various region of the heart, including the atria, future left ventricle, bulbus cordis and truncus arteriosus, and in the forming branchial arches. Expression persists through stage 20, but decreases thereafter. In the developing limbs, from the initiation of the buds (stages 16 to 17), expression is down-regulated at the anterior of the limb buds so that a gradient expression along the anterior-posterior axis of the bud is established with higher expression at the posterior border. At later stages, expression is restricted to the posterior border of the zeugopod and to the posterior autopod. In the autopod, dynamic expression of HAND2 affects the interdigital regions, the lateral borders of the digits and eventually the developing ventral tendons.</text>
</comment>